<dbReference type="EC" id="2.3.1.9" evidence="2"/>
<dbReference type="EMBL" id="D00512">
    <property type="protein sequence ID" value="BAA00401.1"/>
    <property type="status" value="ALT_SEQ"/>
    <property type="molecule type" value="mRNA"/>
</dbReference>
<dbReference type="EMBL" id="D13921">
    <property type="protein sequence ID" value="BAA03016.1"/>
    <property type="molecule type" value="mRNA"/>
</dbReference>
<dbReference type="PIR" id="JU0072">
    <property type="entry name" value="XXRTAC"/>
</dbReference>
<dbReference type="RefSeq" id="NP_058771.2">
    <property type="nucleotide sequence ID" value="NM_017075.2"/>
</dbReference>
<dbReference type="SMR" id="P17764"/>
<dbReference type="BioGRID" id="247097">
    <property type="interactions" value="1"/>
</dbReference>
<dbReference type="FunCoup" id="P17764">
    <property type="interactions" value="1838"/>
</dbReference>
<dbReference type="IntAct" id="P17764">
    <property type="interactions" value="3"/>
</dbReference>
<dbReference type="MINT" id="P17764"/>
<dbReference type="STRING" id="10116.ENSRNOP00000010573"/>
<dbReference type="BindingDB" id="P17764"/>
<dbReference type="ChEMBL" id="CHEMBL3393"/>
<dbReference type="GuidetoPHARMACOLOGY" id="2435"/>
<dbReference type="CarbonylDB" id="P17764"/>
<dbReference type="GlyGen" id="P17764">
    <property type="glycosylation" value="2 sites, 1 O-linked glycan (2 sites)"/>
</dbReference>
<dbReference type="iPTMnet" id="P17764"/>
<dbReference type="PhosphoSitePlus" id="P17764"/>
<dbReference type="SwissPalm" id="P17764"/>
<dbReference type="jPOST" id="P17764"/>
<dbReference type="PaxDb" id="10116-ENSRNOP00000010573"/>
<dbReference type="Ensembl" id="ENSRNOT00000010573.6">
    <property type="protein sequence ID" value="ENSRNOP00000010573.3"/>
    <property type="gene ID" value="ENSRNOG00000007862.7"/>
</dbReference>
<dbReference type="GeneID" id="25014"/>
<dbReference type="KEGG" id="rno:25014"/>
<dbReference type="UCSC" id="RGD:2016">
    <property type="organism name" value="rat"/>
</dbReference>
<dbReference type="AGR" id="RGD:2016"/>
<dbReference type="CTD" id="38"/>
<dbReference type="RGD" id="2016">
    <property type="gene designation" value="Acat1"/>
</dbReference>
<dbReference type="eggNOG" id="KOG1390">
    <property type="taxonomic scope" value="Eukaryota"/>
</dbReference>
<dbReference type="GeneTree" id="ENSGT01030000234626"/>
<dbReference type="HOGENOM" id="CLU_031026_0_1_1"/>
<dbReference type="InParanoid" id="P17764"/>
<dbReference type="OMA" id="SMGTFGE"/>
<dbReference type="OrthoDB" id="5404651at2759"/>
<dbReference type="PhylomeDB" id="P17764"/>
<dbReference type="TreeFam" id="TF300650"/>
<dbReference type="Reactome" id="R-RNO-70895">
    <property type="pathway name" value="Branched-chain amino acid catabolism"/>
</dbReference>
<dbReference type="Reactome" id="R-RNO-77108">
    <property type="pathway name" value="Utilization of Ketone Bodies"/>
</dbReference>
<dbReference type="Reactome" id="R-RNO-77111">
    <property type="pathway name" value="Synthesis of Ketone Bodies"/>
</dbReference>
<dbReference type="Reactome" id="R-RNO-9837999">
    <property type="pathway name" value="Mitochondrial protein degradation"/>
</dbReference>
<dbReference type="Reactome" id="R-RNO-9854311">
    <property type="pathway name" value="Maturation of TCA enzymes and regulation of TCA cycle"/>
</dbReference>
<dbReference type="SABIO-RK" id="P17764"/>
<dbReference type="UniPathway" id="UPA00659"/>
<dbReference type="PRO" id="PR:P17764"/>
<dbReference type="Proteomes" id="UP000002494">
    <property type="component" value="Chromosome 8"/>
</dbReference>
<dbReference type="Bgee" id="ENSRNOG00000007862">
    <property type="expression patterns" value="Expressed in heart and 19 other cell types or tissues"/>
</dbReference>
<dbReference type="GO" id="GO:0005783">
    <property type="term" value="C:endoplasmic reticulum"/>
    <property type="evidence" value="ECO:0000266"/>
    <property type="project" value="RGD"/>
</dbReference>
<dbReference type="GO" id="GO:0005759">
    <property type="term" value="C:mitochondrial matrix"/>
    <property type="evidence" value="ECO:0000314"/>
    <property type="project" value="RGD"/>
</dbReference>
<dbReference type="GO" id="GO:0005739">
    <property type="term" value="C:mitochondrion"/>
    <property type="evidence" value="ECO:0000314"/>
    <property type="project" value="UniProtKB"/>
</dbReference>
<dbReference type="GO" id="GO:0003985">
    <property type="term" value="F:acetyl-CoA C-acetyltransferase activity"/>
    <property type="evidence" value="ECO:0000314"/>
    <property type="project" value="RGD"/>
</dbReference>
<dbReference type="GO" id="GO:0016453">
    <property type="term" value="F:C-acetyltransferase activity"/>
    <property type="evidence" value="ECO:0000266"/>
    <property type="project" value="RGD"/>
</dbReference>
<dbReference type="GO" id="GO:0034736">
    <property type="term" value="F:cholesterol O-acyltransferase activity"/>
    <property type="evidence" value="ECO:0000266"/>
    <property type="project" value="RGD"/>
</dbReference>
<dbReference type="GO" id="GO:0120225">
    <property type="term" value="F:coenzyme A binding"/>
    <property type="evidence" value="ECO:0000353"/>
    <property type="project" value="RGD"/>
</dbReference>
<dbReference type="GO" id="GO:0019899">
    <property type="term" value="F:enzyme binding"/>
    <property type="evidence" value="ECO:0000353"/>
    <property type="project" value="RGD"/>
</dbReference>
<dbReference type="GO" id="GO:0042802">
    <property type="term" value="F:identical protein binding"/>
    <property type="evidence" value="ECO:0000353"/>
    <property type="project" value="RGD"/>
</dbReference>
<dbReference type="GO" id="GO:0030955">
    <property type="term" value="F:potassium ion binding"/>
    <property type="evidence" value="ECO:0000266"/>
    <property type="project" value="RGD"/>
</dbReference>
<dbReference type="GO" id="GO:0006085">
    <property type="term" value="P:acetyl-CoA biosynthetic process"/>
    <property type="evidence" value="ECO:0000266"/>
    <property type="project" value="RGD"/>
</dbReference>
<dbReference type="GO" id="GO:0046356">
    <property type="term" value="P:acetyl-CoA catabolic process"/>
    <property type="evidence" value="ECO:0000266"/>
    <property type="project" value="RGD"/>
</dbReference>
<dbReference type="GO" id="GO:0060612">
    <property type="term" value="P:adipose tissue development"/>
    <property type="evidence" value="ECO:0000270"/>
    <property type="project" value="RGD"/>
</dbReference>
<dbReference type="GO" id="GO:0015937">
    <property type="term" value="P:coenzyme A biosynthetic process"/>
    <property type="evidence" value="ECO:0000266"/>
    <property type="project" value="RGD"/>
</dbReference>
<dbReference type="GO" id="GO:0015936">
    <property type="term" value="P:coenzyme A metabolic process"/>
    <property type="evidence" value="ECO:0000266"/>
    <property type="project" value="RGD"/>
</dbReference>
<dbReference type="GO" id="GO:0006635">
    <property type="term" value="P:fatty acid beta-oxidation"/>
    <property type="evidence" value="ECO:0007669"/>
    <property type="project" value="UniProtKB-UniPathway"/>
</dbReference>
<dbReference type="GO" id="GO:0006550">
    <property type="term" value="P:isoleucine catabolic process"/>
    <property type="evidence" value="ECO:0000266"/>
    <property type="project" value="RGD"/>
</dbReference>
<dbReference type="GO" id="GO:0046952">
    <property type="term" value="P:ketone body catabolic process"/>
    <property type="evidence" value="ECO:0000266"/>
    <property type="project" value="RGD"/>
</dbReference>
<dbReference type="GO" id="GO:0001889">
    <property type="term" value="P:liver development"/>
    <property type="evidence" value="ECO:0000270"/>
    <property type="project" value="RGD"/>
</dbReference>
<dbReference type="GO" id="GO:0072229">
    <property type="term" value="P:metanephric proximal convoluted tubule development"/>
    <property type="evidence" value="ECO:0000270"/>
    <property type="project" value="RGD"/>
</dbReference>
<dbReference type="GO" id="GO:1902860">
    <property type="term" value="P:propionyl-CoA biosynthetic process"/>
    <property type="evidence" value="ECO:0000266"/>
    <property type="project" value="RGD"/>
</dbReference>
<dbReference type="GO" id="GO:0009725">
    <property type="term" value="P:response to hormone"/>
    <property type="evidence" value="ECO:0000270"/>
    <property type="project" value="RGD"/>
</dbReference>
<dbReference type="GO" id="GO:0042594">
    <property type="term" value="P:response to starvation"/>
    <property type="evidence" value="ECO:0000270"/>
    <property type="project" value="RGD"/>
</dbReference>
<dbReference type="CDD" id="cd00751">
    <property type="entry name" value="thiolase"/>
    <property type="match status" value="1"/>
</dbReference>
<dbReference type="FunFam" id="3.40.47.10:FF:000007">
    <property type="entry name" value="acetyl-CoA acetyltransferase, mitochondrial"/>
    <property type="match status" value="1"/>
</dbReference>
<dbReference type="Gene3D" id="3.40.47.10">
    <property type="match status" value="1"/>
</dbReference>
<dbReference type="InterPro" id="IPR002155">
    <property type="entry name" value="Thiolase"/>
</dbReference>
<dbReference type="InterPro" id="IPR016039">
    <property type="entry name" value="Thiolase-like"/>
</dbReference>
<dbReference type="InterPro" id="IPR020615">
    <property type="entry name" value="Thiolase_acyl_enz_int_AS"/>
</dbReference>
<dbReference type="InterPro" id="IPR020610">
    <property type="entry name" value="Thiolase_AS"/>
</dbReference>
<dbReference type="InterPro" id="IPR020617">
    <property type="entry name" value="Thiolase_C"/>
</dbReference>
<dbReference type="InterPro" id="IPR020613">
    <property type="entry name" value="Thiolase_CS"/>
</dbReference>
<dbReference type="InterPro" id="IPR020616">
    <property type="entry name" value="Thiolase_N"/>
</dbReference>
<dbReference type="NCBIfam" id="TIGR01930">
    <property type="entry name" value="AcCoA-C-Actrans"/>
    <property type="match status" value="1"/>
</dbReference>
<dbReference type="PANTHER" id="PTHR18919:SF156">
    <property type="entry name" value="ACETYL-COA ACETYLTRANSFERASE, MITOCHONDRIAL"/>
    <property type="match status" value="1"/>
</dbReference>
<dbReference type="PANTHER" id="PTHR18919">
    <property type="entry name" value="ACETYL-COA C-ACYLTRANSFERASE"/>
    <property type="match status" value="1"/>
</dbReference>
<dbReference type="Pfam" id="PF02803">
    <property type="entry name" value="Thiolase_C"/>
    <property type="match status" value="1"/>
</dbReference>
<dbReference type="Pfam" id="PF00108">
    <property type="entry name" value="Thiolase_N"/>
    <property type="match status" value="1"/>
</dbReference>
<dbReference type="PIRSF" id="PIRSF000429">
    <property type="entry name" value="Ac-CoA_Ac_transf"/>
    <property type="match status" value="1"/>
</dbReference>
<dbReference type="SUPFAM" id="SSF53901">
    <property type="entry name" value="Thiolase-like"/>
    <property type="match status" value="2"/>
</dbReference>
<dbReference type="PROSITE" id="PS00098">
    <property type="entry name" value="THIOLASE_1"/>
    <property type="match status" value="1"/>
</dbReference>
<dbReference type="PROSITE" id="PS00737">
    <property type="entry name" value="THIOLASE_2"/>
    <property type="match status" value="1"/>
</dbReference>
<dbReference type="PROSITE" id="PS00099">
    <property type="entry name" value="THIOLASE_3"/>
    <property type="match status" value="1"/>
</dbReference>
<sequence>MAALAVLHGVVRRPLLRGLLQEVRCLGRSYASKPTLNDVVIVSATRTPIGSFLGSLASQPATKLGTIAIQGAIEKAGIPKEEVKEVYMGNVIQGGEGQAPTRQATLGAGLPIATPCTTVNKVCASGMKAIMMASQSLMCGHQDVMVAGGMESMSNVPYVMSRGATPYGGVKLEDLIVKDGLTDVYNKIHMGNCAENTAKKLSISREEQDKYAIGSYTRSKEAWDAGKFANEITPITISVKGKPDVVVKEDEEYKRVDFSKVPKLKTVFQKENGTVTAANASTLNDGAAAVVLMTAEAAQRLKVKPLARIAAFADAAVDPIDFPLAPAYAVPKVLKYAGLKKEDIAMWEVNEAFSVVVLANIKMLEIDPQKVNVHGGAVSLGHPIGMSGARIVVHLAHALKQGEFGLASICNGGGGASAVLIEKL</sequence>
<comment type="function">
    <text evidence="2">This is one of the enzymes that catalyzes the last step of the mitochondrial beta-oxidation pathway, an aerobic process breaking down fatty acids into acetyl-CoA. Using free coenzyme A/CoA, catalyzes the thiolytic cleavage of medium- to long-chain 3-oxoacyl-CoAs into acetyl-CoA and a fatty acyl-CoA shortened by two carbon atoms. The activity of the enzyme is reversible and it can also catalyze the condensation of two acetyl-CoA molecules into acetoacetyl-CoA. Thereby, it plays a major role in ketone body metabolism.</text>
</comment>
<comment type="catalytic activity">
    <reaction evidence="4">
        <text>2 acetyl-CoA = acetoacetyl-CoA + CoA</text>
        <dbReference type="Rhea" id="RHEA:21036"/>
        <dbReference type="ChEBI" id="CHEBI:57286"/>
        <dbReference type="ChEBI" id="CHEBI:57287"/>
        <dbReference type="ChEBI" id="CHEBI:57288"/>
        <dbReference type="EC" id="2.3.1.9"/>
    </reaction>
    <physiologicalReaction direction="left-to-right" evidence="2">
        <dbReference type="Rhea" id="RHEA:21037"/>
    </physiologicalReaction>
    <physiologicalReaction direction="right-to-left" evidence="2">
        <dbReference type="Rhea" id="RHEA:21038"/>
    </physiologicalReaction>
</comment>
<comment type="catalytic activity">
    <reaction evidence="2">
        <text>propanoyl-CoA + acetyl-CoA = 2-methyl-3-oxobutanoyl-CoA + CoA</text>
        <dbReference type="Rhea" id="RHEA:30719"/>
        <dbReference type="ChEBI" id="CHEBI:57287"/>
        <dbReference type="ChEBI" id="CHEBI:57288"/>
        <dbReference type="ChEBI" id="CHEBI:57335"/>
        <dbReference type="ChEBI" id="CHEBI:57392"/>
    </reaction>
    <physiologicalReaction direction="left-to-right" evidence="2">
        <dbReference type="Rhea" id="RHEA:30720"/>
    </physiologicalReaction>
    <physiologicalReaction direction="right-to-left" evidence="2">
        <dbReference type="Rhea" id="RHEA:30721"/>
    </physiologicalReaction>
</comment>
<comment type="activity regulation">
    <text evidence="2">Activated by potassium ions, but not sodium ions.</text>
</comment>
<comment type="pathway">
    <text evidence="2">Lipid metabolism; fatty acid beta-oxidation.</text>
</comment>
<comment type="subunit">
    <text evidence="2">Homotetramer.</text>
</comment>
<comment type="subcellular location">
    <subcellularLocation>
        <location evidence="2">Mitochondrion</location>
    </subcellularLocation>
</comment>
<comment type="PTM">
    <text evidence="1">Succinylation at Lys-265, adjacent to a coenzyme A binding site. Desuccinylated by SIRT5 (By similarity).</text>
</comment>
<comment type="similarity">
    <text evidence="6">Belongs to the thiolase-like superfamily. Thiolase family.</text>
</comment>
<evidence type="ECO:0000250" key="1"/>
<evidence type="ECO:0000250" key="2">
    <source>
        <dbReference type="UniProtKB" id="P24752"/>
    </source>
</evidence>
<evidence type="ECO:0000250" key="3">
    <source>
        <dbReference type="UniProtKB" id="Q8QZT1"/>
    </source>
</evidence>
<evidence type="ECO:0000255" key="4">
    <source>
        <dbReference type="PROSITE-ProRule" id="PRU10020"/>
    </source>
</evidence>
<evidence type="ECO:0000269" key="5">
    <source>
    </source>
</evidence>
<evidence type="ECO:0000305" key="6"/>
<accession>P17764</accession>
<organism>
    <name type="scientific">Rattus norvegicus</name>
    <name type="common">Rat</name>
    <dbReference type="NCBI Taxonomy" id="10116"/>
    <lineage>
        <taxon>Eukaryota</taxon>
        <taxon>Metazoa</taxon>
        <taxon>Chordata</taxon>
        <taxon>Craniata</taxon>
        <taxon>Vertebrata</taxon>
        <taxon>Euteleostomi</taxon>
        <taxon>Mammalia</taxon>
        <taxon>Eutheria</taxon>
        <taxon>Euarchontoglires</taxon>
        <taxon>Glires</taxon>
        <taxon>Rodentia</taxon>
        <taxon>Myomorpha</taxon>
        <taxon>Muroidea</taxon>
        <taxon>Muridae</taxon>
        <taxon>Murinae</taxon>
        <taxon>Rattus</taxon>
    </lineage>
</organism>
<proteinExistence type="evidence at protein level"/>
<gene>
    <name type="primary">Acat1</name>
</gene>
<name>THIL_RAT</name>
<feature type="transit peptide" description="Mitochondrion" evidence="5">
    <location>
        <begin position="1"/>
        <end position="30"/>
    </location>
</feature>
<feature type="chain" id="PRO_0000034088" description="Acetyl-CoA acetyltransferase, mitochondrial">
    <location>
        <begin position="31"/>
        <end position="424"/>
    </location>
</feature>
<feature type="active site" description="Acyl-thioester intermediate" evidence="2">
    <location>
        <position position="123"/>
    </location>
</feature>
<feature type="active site" description="Proton donor/acceptor" evidence="2">
    <location>
        <position position="410"/>
    </location>
</feature>
<feature type="binding site" evidence="2">
    <location>
        <position position="216"/>
    </location>
    <ligand>
        <name>CoA</name>
        <dbReference type="ChEBI" id="CHEBI:57287"/>
    </ligand>
</feature>
<feature type="binding site" evidence="2">
    <location>
        <position position="216"/>
    </location>
    <ligand>
        <name>K(+)</name>
        <dbReference type="ChEBI" id="CHEBI:29103"/>
    </ligand>
</feature>
<feature type="binding site" evidence="2">
    <location>
        <begin position="255"/>
        <end position="257"/>
    </location>
    <ligand>
        <name>CoA</name>
        <dbReference type="ChEBI" id="CHEBI:57287"/>
    </ligand>
</feature>
<feature type="binding site" evidence="2">
    <location>
        <position position="260"/>
    </location>
    <ligand>
        <name>CoA</name>
        <dbReference type="ChEBI" id="CHEBI:57287"/>
    </ligand>
</feature>
<feature type="binding site" evidence="2">
    <location>
        <position position="277"/>
    </location>
    <ligand>
        <name>K(+)</name>
        <dbReference type="ChEBI" id="CHEBI:29103"/>
    </ligand>
</feature>
<feature type="binding site" evidence="2">
    <location>
        <position position="278"/>
    </location>
    <ligand>
        <name>K(+)</name>
        <dbReference type="ChEBI" id="CHEBI:29103"/>
    </ligand>
</feature>
<feature type="binding site" evidence="2">
    <location>
        <position position="280"/>
    </location>
    <ligand>
        <name>K(+)</name>
        <dbReference type="ChEBI" id="CHEBI:29103"/>
    </ligand>
</feature>
<feature type="binding site" evidence="2">
    <location>
        <position position="281"/>
    </location>
    <ligand>
        <name>CoA</name>
        <dbReference type="ChEBI" id="CHEBI:57287"/>
    </ligand>
</feature>
<feature type="binding site" evidence="2">
    <location>
        <position position="378"/>
    </location>
    <ligand>
        <name>K(+)</name>
        <dbReference type="ChEBI" id="CHEBI:29103"/>
    </ligand>
</feature>
<feature type="site" description="Increases nucleophilicity of active site Cys" evidence="2">
    <location>
        <position position="382"/>
    </location>
</feature>
<feature type="modified residue" description="N6-acetyllysine; alternate" evidence="3">
    <location>
        <position position="63"/>
    </location>
</feature>
<feature type="modified residue" description="N6-succinyllysine; alternate" evidence="3">
    <location>
        <position position="63"/>
    </location>
</feature>
<feature type="modified residue" description="N6-succinyllysine" evidence="3">
    <location>
        <position position="75"/>
    </location>
</feature>
<feature type="modified residue" description="N6-acetyllysine; alternate" evidence="2">
    <location>
        <position position="171"/>
    </location>
</feature>
<feature type="modified residue" description="N6-succinyllysine; alternate" evidence="3">
    <location>
        <position position="171"/>
    </location>
</feature>
<feature type="modified residue" description="N6-acetyllysine; alternate" evidence="2">
    <location>
        <position position="178"/>
    </location>
</feature>
<feature type="modified residue" description="N6-succinyllysine; alternate" evidence="3">
    <location>
        <position position="178"/>
    </location>
</feature>
<feature type="modified residue" description="N6-acetyllysine; alternate" evidence="3">
    <location>
        <position position="187"/>
    </location>
</feature>
<feature type="modified residue" description="N6-succinyllysine; alternate" evidence="3">
    <location>
        <position position="187"/>
    </location>
</feature>
<feature type="modified residue" description="N6-acetyllysine; alternate" evidence="3">
    <location>
        <position position="199"/>
    </location>
</feature>
<feature type="modified residue" description="N6-succinyllysine; alternate" evidence="3">
    <location>
        <position position="199"/>
    </location>
</feature>
<feature type="modified residue" description="Phosphoserine" evidence="3">
    <location>
        <position position="204"/>
    </location>
</feature>
<feature type="modified residue" description="N6-acetyllysine; alternate" evidence="3">
    <location>
        <position position="220"/>
    </location>
</feature>
<feature type="modified residue" description="N6-succinyllysine; alternate" evidence="3">
    <location>
        <position position="220"/>
    </location>
</feature>
<feature type="modified residue" description="N6-acetyllysine; alternate" evidence="3">
    <location>
        <position position="227"/>
    </location>
</feature>
<feature type="modified residue" description="N6-succinyllysine; alternate" evidence="3">
    <location>
        <position position="227"/>
    </location>
</feature>
<feature type="modified residue" description="N6-succinyllysine" evidence="3">
    <location>
        <position position="240"/>
    </location>
</feature>
<feature type="modified residue" description="N6-acetyllysine; alternate" evidence="3">
    <location>
        <position position="242"/>
    </location>
</feature>
<feature type="modified residue" description="N6-succinyllysine; alternate" evidence="3">
    <location>
        <position position="242"/>
    </location>
</feature>
<feature type="modified residue" description="N6-acetyllysine" evidence="2">
    <location>
        <position position="248"/>
    </location>
</feature>
<feature type="modified residue" description="N6-acetyllysine" evidence="3">
    <location>
        <position position="254"/>
    </location>
</feature>
<feature type="modified residue" description="N6-acetyllysine; alternate" evidence="2">
    <location>
        <position position="260"/>
    </location>
</feature>
<feature type="modified residue" description="N6-succinyllysine; alternate" evidence="3">
    <location>
        <position position="260"/>
    </location>
</feature>
<feature type="modified residue" description="N6-succinyllysine" evidence="3">
    <location>
        <position position="263"/>
    </location>
</feature>
<feature type="modified residue" description="N6-succinyllysine" evidence="3">
    <location>
        <position position="265"/>
    </location>
</feature>
<feature type="modified residue" description="N6-acetyllysine" evidence="3">
    <location>
        <position position="270"/>
    </location>
</feature>
<feature type="modified residue" description="N6-acetyllysine" evidence="3">
    <location>
        <position position="335"/>
    </location>
</feature>
<keyword id="KW-0007">Acetylation</keyword>
<keyword id="KW-0012">Acyltransferase</keyword>
<keyword id="KW-0903">Direct protein sequencing</keyword>
<keyword id="KW-0276">Fatty acid metabolism</keyword>
<keyword id="KW-0443">Lipid metabolism</keyword>
<keyword id="KW-0479">Metal-binding</keyword>
<keyword id="KW-0496">Mitochondrion</keyword>
<keyword id="KW-0597">Phosphoprotein</keyword>
<keyword id="KW-0630">Potassium</keyword>
<keyword id="KW-1185">Reference proteome</keyword>
<keyword id="KW-0808">Transferase</keyword>
<keyword id="KW-0809">Transit peptide</keyword>
<reference key="1">
    <citation type="journal article" date="1989" name="J. Biochem.">
        <title>Molecular cloning and nucleotide sequence of cDNA encoding the entire precursor of rat mitochondrial acetoacetyl-CoA thiolase.</title>
        <authorList>
            <person name="Fukao T."/>
            <person name="Kamijo K."/>
            <person name="Osumi T."/>
            <person name="Fujiki Y."/>
            <person name="Yamaguchi S."/>
            <person name="Orii T."/>
            <person name="Hashimoto T."/>
        </authorList>
    </citation>
    <scope>NUCLEOTIDE SEQUENCE [MRNA]</scope>
    <scope>PROTEIN SEQUENCE OF 31-50</scope>
</reference>
<protein>
    <recommendedName>
        <fullName>Acetyl-CoA acetyltransferase, mitochondrial</fullName>
        <ecNumber evidence="2">2.3.1.9</ecNumber>
    </recommendedName>
    <alternativeName>
        <fullName>Acetoacetyl-CoA thiolase</fullName>
    </alternativeName>
</protein>